<reference key="1">
    <citation type="journal article" date="2009" name="PLoS Genet.">
        <title>The complete genome and proteome of Laribacter hongkongensis reveal potential mechanisms for adaptations to different temperatures and habitats.</title>
        <authorList>
            <person name="Woo P.C.Y."/>
            <person name="Lau S.K.P."/>
            <person name="Tse H."/>
            <person name="Teng J.L.L."/>
            <person name="Curreem S.O."/>
            <person name="Tsang A.K.L."/>
            <person name="Fan R.Y.Y."/>
            <person name="Wong G.K.M."/>
            <person name="Huang Y."/>
            <person name="Loman N.J."/>
            <person name="Snyder L.A.S."/>
            <person name="Cai J.J."/>
            <person name="Huang J.-D."/>
            <person name="Mak W."/>
            <person name="Pallen M.J."/>
            <person name="Lok S."/>
            <person name="Yuen K.-Y."/>
        </authorList>
    </citation>
    <scope>NUCLEOTIDE SEQUENCE [LARGE SCALE GENOMIC DNA]</scope>
    <source>
        <strain>HLHK9</strain>
    </source>
</reference>
<gene>
    <name evidence="1" type="primary">dctA</name>
    <name type="ordered locus">LHK_01881</name>
</gene>
<proteinExistence type="inferred from homology"/>
<protein>
    <recommendedName>
        <fullName evidence="1">C4-dicarboxylate transport protein</fullName>
    </recommendedName>
</protein>
<sequence>MQSRKLYKSLYFQVIVAIICGVLLGHFMPDSGTAMKPLGDGFIKLVKMMITPIIFCTVVVGIAGMEDMKKVGRVGGKALLYFEVVTTLALIIGLVVVNVLKPGAGMNVDPATLDTGAIAKYTAKAGEQSVVDFVLHIIPNSVVGAFAEGEILQVLLFSVLFGFALSMMGQSGKPVVKLVEDISHALFAAIGFIMKLAPIGAFGAMAFTIGKYGVSSLSSLAALMGSFYLTCLLFIGLVLGTITRFCGFSIWKLVRYIKEELLIVLGTSSSESALPRLMAKLEQLGCQKSVVGLVVPTGYSFNLDGTSIYLTMAAIFIAQACGIELTLTQELTIIGVLLLTSKGAAGVTGSGFITLAATLATVPDIPVAGLALILGIDRFMSEARALTNLVGNTVATVVVAKWENALDSDKLAAELHNPTPLAHGLKVEAPHLTREVSRTLS</sequence>
<keyword id="KW-0997">Cell inner membrane</keyword>
<keyword id="KW-1003">Cell membrane</keyword>
<keyword id="KW-0472">Membrane</keyword>
<keyword id="KW-1185">Reference proteome</keyword>
<keyword id="KW-0769">Symport</keyword>
<keyword id="KW-0812">Transmembrane</keyword>
<keyword id="KW-1133">Transmembrane helix</keyword>
<keyword id="KW-0813">Transport</keyword>
<accession>C1D8S5</accession>
<evidence type="ECO:0000255" key="1">
    <source>
        <dbReference type="HAMAP-Rule" id="MF_01300"/>
    </source>
</evidence>
<comment type="function">
    <text evidence="1">Responsible for the transport of dicarboxylates such as succinate, fumarate, and malate from the periplasm across the membrane.</text>
</comment>
<comment type="subcellular location">
    <subcellularLocation>
        <location evidence="1">Cell inner membrane</location>
        <topology evidence="1">Multi-pass membrane protein</topology>
    </subcellularLocation>
</comment>
<comment type="similarity">
    <text evidence="1">Belongs to the dicarboxylate/amino acid:cation symporter (DAACS) (TC 2.A.23) family.</text>
</comment>
<organism>
    <name type="scientific">Laribacter hongkongensis (strain HLHK9)</name>
    <dbReference type="NCBI Taxonomy" id="557598"/>
    <lineage>
        <taxon>Bacteria</taxon>
        <taxon>Pseudomonadati</taxon>
        <taxon>Pseudomonadota</taxon>
        <taxon>Betaproteobacteria</taxon>
        <taxon>Neisseriales</taxon>
        <taxon>Aquaspirillaceae</taxon>
        <taxon>Laribacter</taxon>
    </lineage>
</organism>
<dbReference type="EMBL" id="CP001154">
    <property type="protein sequence ID" value="ACO74865.1"/>
    <property type="molecule type" value="Genomic_DNA"/>
</dbReference>
<dbReference type="RefSeq" id="WP_012697351.1">
    <property type="nucleotide sequence ID" value="NC_012559.1"/>
</dbReference>
<dbReference type="SMR" id="C1D8S5"/>
<dbReference type="STRING" id="557598.LHK_01881"/>
<dbReference type="KEGG" id="lhk:LHK_01881"/>
<dbReference type="eggNOG" id="COG1301">
    <property type="taxonomic scope" value="Bacteria"/>
</dbReference>
<dbReference type="HOGENOM" id="CLU_019375_7_0_4"/>
<dbReference type="Proteomes" id="UP000002010">
    <property type="component" value="Chromosome"/>
</dbReference>
<dbReference type="GO" id="GO:0005886">
    <property type="term" value="C:plasma membrane"/>
    <property type="evidence" value="ECO:0007669"/>
    <property type="project" value="UniProtKB-SubCell"/>
</dbReference>
<dbReference type="GO" id="GO:0015138">
    <property type="term" value="F:fumarate transmembrane transporter activity"/>
    <property type="evidence" value="ECO:0007669"/>
    <property type="project" value="TreeGrafter"/>
</dbReference>
<dbReference type="GO" id="GO:0015366">
    <property type="term" value="F:malate:proton symporter activity"/>
    <property type="evidence" value="ECO:0007669"/>
    <property type="project" value="TreeGrafter"/>
</dbReference>
<dbReference type="GO" id="GO:0015141">
    <property type="term" value="F:succinate transmembrane transporter activity"/>
    <property type="evidence" value="ECO:0007669"/>
    <property type="project" value="TreeGrafter"/>
</dbReference>
<dbReference type="GO" id="GO:0070778">
    <property type="term" value="P:L-aspartate transmembrane transport"/>
    <property type="evidence" value="ECO:0007669"/>
    <property type="project" value="TreeGrafter"/>
</dbReference>
<dbReference type="FunFam" id="1.10.3860.10:FF:000001">
    <property type="entry name" value="C4-dicarboxylate transport protein"/>
    <property type="match status" value="1"/>
</dbReference>
<dbReference type="Gene3D" id="1.10.3860.10">
    <property type="entry name" value="Sodium:dicarboxylate symporter"/>
    <property type="match status" value="1"/>
</dbReference>
<dbReference type="HAMAP" id="MF_01300">
    <property type="entry name" value="C4_dicarb_transport"/>
    <property type="match status" value="1"/>
</dbReference>
<dbReference type="InterPro" id="IPR023954">
    <property type="entry name" value="C4_dicarb_transport"/>
</dbReference>
<dbReference type="InterPro" id="IPR001991">
    <property type="entry name" value="Na-dicarboxylate_symporter"/>
</dbReference>
<dbReference type="InterPro" id="IPR018107">
    <property type="entry name" value="Na-dicarboxylate_symporter_CS"/>
</dbReference>
<dbReference type="InterPro" id="IPR036458">
    <property type="entry name" value="Na:dicarbo_symporter_sf"/>
</dbReference>
<dbReference type="NCBIfam" id="NF002461">
    <property type="entry name" value="PRK01663.1"/>
    <property type="match status" value="1"/>
</dbReference>
<dbReference type="NCBIfam" id="NF009587">
    <property type="entry name" value="PRK13027.1"/>
    <property type="match status" value="1"/>
</dbReference>
<dbReference type="PANTHER" id="PTHR42865:SF1">
    <property type="entry name" value="AEROBIC C4-DICARBOXYLATE TRANSPORT PROTEIN"/>
    <property type="match status" value="1"/>
</dbReference>
<dbReference type="PANTHER" id="PTHR42865">
    <property type="entry name" value="PROTON/GLUTAMATE-ASPARTATE SYMPORTER"/>
    <property type="match status" value="1"/>
</dbReference>
<dbReference type="Pfam" id="PF00375">
    <property type="entry name" value="SDF"/>
    <property type="match status" value="1"/>
</dbReference>
<dbReference type="PRINTS" id="PR00173">
    <property type="entry name" value="EDTRNSPORT"/>
</dbReference>
<dbReference type="SUPFAM" id="SSF118215">
    <property type="entry name" value="Proton glutamate symport protein"/>
    <property type="match status" value="1"/>
</dbReference>
<dbReference type="PROSITE" id="PS00713">
    <property type="entry name" value="NA_DICARBOXYL_SYMP_1"/>
    <property type="match status" value="1"/>
</dbReference>
<dbReference type="PROSITE" id="PS00714">
    <property type="entry name" value="NA_DICARBOXYL_SYMP_2"/>
    <property type="match status" value="1"/>
</dbReference>
<feature type="chain" id="PRO_1000165290" description="C4-dicarboxylate transport protein">
    <location>
        <begin position="1"/>
        <end position="441"/>
    </location>
</feature>
<feature type="transmembrane region" description="Helical" evidence="1">
    <location>
        <begin position="9"/>
        <end position="29"/>
    </location>
</feature>
<feature type="transmembrane region" description="Helical" evidence="1">
    <location>
        <begin position="45"/>
        <end position="65"/>
    </location>
</feature>
<feature type="transmembrane region" description="Helical" evidence="1">
    <location>
        <begin position="79"/>
        <end position="99"/>
    </location>
</feature>
<feature type="transmembrane region" description="Helical" evidence="1">
    <location>
        <begin position="145"/>
        <end position="165"/>
    </location>
</feature>
<feature type="transmembrane region" description="Helical" evidence="1">
    <location>
        <begin position="187"/>
        <end position="207"/>
    </location>
</feature>
<feature type="transmembrane region" description="Helical" evidence="1">
    <location>
        <begin position="220"/>
        <end position="240"/>
    </location>
</feature>
<feature type="transmembrane region" description="Helical" evidence="1">
    <location>
        <begin position="308"/>
        <end position="328"/>
    </location>
</feature>
<feature type="transmembrane region" description="Helical" evidence="1">
    <location>
        <begin position="356"/>
        <end position="376"/>
    </location>
</feature>
<name>DCTA_LARHH</name>